<reference key="1">
    <citation type="journal article" date="2008" name="PLoS ONE">
        <title>Comparative analysis of Acinetobacters: three genomes for three lifestyles.</title>
        <authorList>
            <person name="Vallenet D."/>
            <person name="Nordmann P."/>
            <person name="Barbe V."/>
            <person name="Poirel L."/>
            <person name="Mangenot S."/>
            <person name="Bataille E."/>
            <person name="Dossat C."/>
            <person name="Gas S."/>
            <person name="Kreimeyer A."/>
            <person name="Lenoble P."/>
            <person name="Oztas S."/>
            <person name="Poulain J."/>
            <person name="Segurens B."/>
            <person name="Robert C."/>
            <person name="Abergel C."/>
            <person name="Claverie J.-M."/>
            <person name="Raoult D."/>
            <person name="Medigue C."/>
            <person name="Weissenbach J."/>
            <person name="Cruveiller S."/>
        </authorList>
    </citation>
    <scope>NUCLEOTIDE SEQUENCE [LARGE SCALE GENOMIC DNA]</scope>
    <source>
        <strain>SDF</strain>
    </source>
</reference>
<accession>B0VSP5</accession>
<protein>
    <recommendedName>
        <fullName evidence="1">Chaperonin GroEL</fullName>
        <ecNumber evidence="1">5.6.1.7</ecNumber>
    </recommendedName>
    <alternativeName>
        <fullName evidence="1">60 kDa chaperonin</fullName>
    </alternativeName>
    <alternativeName>
        <fullName evidence="1">Chaperonin-60</fullName>
        <shortName evidence="1">Cpn60</shortName>
    </alternativeName>
</protein>
<evidence type="ECO:0000255" key="1">
    <source>
        <dbReference type="HAMAP-Rule" id="MF_00600"/>
    </source>
</evidence>
<sequence length="541" mass="56921">MSAKDVKFGDSARSKMIAGVNVLADAVKVTLGPKGRNVVIDRSFGAPHITKDGVTVAKEISLKDKFENMGAQLVREVSSKTNDIAGDGTTTATVLAQAILNEGIKSVTAGMNPMDLKRGIDIAVKTVVENIRSIAKPADDFKAIEQVGSISANSDTTVGKLIAQAMEKVGKEGVITVEEGSGFEDALDVVEGMQFDRGYISPYFANKQDTLTAELENPFILLVDKKISNIRELISVLEAVAKTGKPLLIIAEDVEGEALATLVVNNMRGIIKVCAVKAPGFGDRRKAMLQDIAILTGATVISEEVGMSLEQATLQDLGTAHKITVSKENTVIVDGAGDAAAIAERVQQIRAQIEESTSEYDREKLQERVAKLAGGVAVIKIGAATEVEMKEKKDRVDDALHATRAAVEEGVVAGGGVALVRAVNALEGLKGANEDQTAGINILRRAIEAPLRQIVANAGDEPSVVINAVKNGEGNFGYNAATGEYGDMLEMGILDPAKVTRSALEHAASVAGLMLTTECMITDIPEDKPAAPDMGGMGGMM</sequence>
<dbReference type="EC" id="5.6.1.7" evidence="1"/>
<dbReference type="EMBL" id="CU468230">
    <property type="protein sequence ID" value="CAP00185.1"/>
    <property type="molecule type" value="Genomic_DNA"/>
</dbReference>
<dbReference type="SMR" id="B0VSP5"/>
<dbReference type="KEGG" id="abm:ABSDF0818"/>
<dbReference type="HOGENOM" id="CLU_016503_3_0_6"/>
<dbReference type="Proteomes" id="UP000001741">
    <property type="component" value="Chromosome"/>
</dbReference>
<dbReference type="GO" id="GO:0005737">
    <property type="term" value="C:cytoplasm"/>
    <property type="evidence" value="ECO:0007669"/>
    <property type="project" value="UniProtKB-SubCell"/>
</dbReference>
<dbReference type="GO" id="GO:0005524">
    <property type="term" value="F:ATP binding"/>
    <property type="evidence" value="ECO:0007669"/>
    <property type="project" value="UniProtKB-UniRule"/>
</dbReference>
<dbReference type="GO" id="GO:0140662">
    <property type="term" value="F:ATP-dependent protein folding chaperone"/>
    <property type="evidence" value="ECO:0007669"/>
    <property type="project" value="InterPro"/>
</dbReference>
<dbReference type="GO" id="GO:0016853">
    <property type="term" value="F:isomerase activity"/>
    <property type="evidence" value="ECO:0007669"/>
    <property type="project" value="UniProtKB-KW"/>
</dbReference>
<dbReference type="GO" id="GO:0051082">
    <property type="term" value="F:unfolded protein binding"/>
    <property type="evidence" value="ECO:0007669"/>
    <property type="project" value="UniProtKB-UniRule"/>
</dbReference>
<dbReference type="GO" id="GO:0042026">
    <property type="term" value="P:protein refolding"/>
    <property type="evidence" value="ECO:0007669"/>
    <property type="project" value="UniProtKB-UniRule"/>
</dbReference>
<dbReference type="CDD" id="cd03344">
    <property type="entry name" value="GroEL"/>
    <property type="match status" value="1"/>
</dbReference>
<dbReference type="FunFam" id="1.10.560.10:FF:000001">
    <property type="entry name" value="60 kDa chaperonin"/>
    <property type="match status" value="1"/>
</dbReference>
<dbReference type="FunFam" id="3.50.7.10:FF:000001">
    <property type="entry name" value="60 kDa chaperonin"/>
    <property type="match status" value="1"/>
</dbReference>
<dbReference type="Gene3D" id="3.50.7.10">
    <property type="entry name" value="GroEL"/>
    <property type="match status" value="1"/>
</dbReference>
<dbReference type="Gene3D" id="1.10.560.10">
    <property type="entry name" value="GroEL-like equatorial domain"/>
    <property type="match status" value="1"/>
</dbReference>
<dbReference type="Gene3D" id="3.30.260.10">
    <property type="entry name" value="TCP-1-like chaperonin intermediate domain"/>
    <property type="match status" value="1"/>
</dbReference>
<dbReference type="HAMAP" id="MF_00600">
    <property type="entry name" value="CH60"/>
    <property type="match status" value="1"/>
</dbReference>
<dbReference type="InterPro" id="IPR018370">
    <property type="entry name" value="Chaperonin_Cpn60_CS"/>
</dbReference>
<dbReference type="InterPro" id="IPR001844">
    <property type="entry name" value="Cpn60/GroEL"/>
</dbReference>
<dbReference type="InterPro" id="IPR002423">
    <property type="entry name" value="Cpn60/GroEL/TCP-1"/>
</dbReference>
<dbReference type="InterPro" id="IPR027409">
    <property type="entry name" value="GroEL-like_apical_dom_sf"/>
</dbReference>
<dbReference type="InterPro" id="IPR027413">
    <property type="entry name" value="GROEL-like_equatorial_sf"/>
</dbReference>
<dbReference type="InterPro" id="IPR027410">
    <property type="entry name" value="TCP-1-like_intermed_sf"/>
</dbReference>
<dbReference type="NCBIfam" id="TIGR02348">
    <property type="entry name" value="GroEL"/>
    <property type="match status" value="1"/>
</dbReference>
<dbReference type="NCBIfam" id="NF000592">
    <property type="entry name" value="PRK00013.1"/>
    <property type="match status" value="1"/>
</dbReference>
<dbReference type="NCBIfam" id="NF009487">
    <property type="entry name" value="PRK12849.1"/>
    <property type="match status" value="1"/>
</dbReference>
<dbReference type="NCBIfam" id="NF009488">
    <property type="entry name" value="PRK12850.1"/>
    <property type="match status" value="1"/>
</dbReference>
<dbReference type="NCBIfam" id="NF009489">
    <property type="entry name" value="PRK12851.1"/>
    <property type="match status" value="1"/>
</dbReference>
<dbReference type="PANTHER" id="PTHR45633">
    <property type="entry name" value="60 KDA HEAT SHOCK PROTEIN, MITOCHONDRIAL"/>
    <property type="match status" value="1"/>
</dbReference>
<dbReference type="Pfam" id="PF00118">
    <property type="entry name" value="Cpn60_TCP1"/>
    <property type="match status" value="1"/>
</dbReference>
<dbReference type="PRINTS" id="PR00298">
    <property type="entry name" value="CHAPERONIN60"/>
</dbReference>
<dbReference type="SUPFAM" id="SSF52029">
    <property type="entry name" value="GroEL apical domain-like"/>
    <property type="match status" value="1"/>
</dbReference>
<dbReference type="SUPFAM" id="SSF48592">
    <property type="entry name" value="GroEL equatorial domain-like"/>
    <property type="match status" value="1"/>
</dbReference>
<dbReference type="SUPFAM" id="SSF54849">
    <property type="entry name" value="GroEL-intermediate domain like"/>
    <property type="match status" value="1"/>
</dbReference>
<dbReference type="PROSITE" id="PS00296">
    <property type="entry name" value="CHAPERONINS_CPN60"/>
    <property type="match status" value="1"/>
</dbReference>
<gene>
    <name evidence="1" type="primary">groEL</name>
    <name evidence="1" type="synonym">groL</name>
    <name type="ordered locus">ABSDF0818</name>
</gene>
<name>CH60_ACIBS</name>
<proteinExistence type="inferred from homology"/>
<comment type="function">
    <text evidence="1">Together with its co-chaperonin GroES, plays an essential role in assisting protein folding. The GroEL-GroES system forms a nano-cage that allows encapsulation of the non-native substrate proteins and provides a physical environment optimized to promote and accelerate protein folding.</text>
</comment>
<comment type="catalytic activity">
    <reaction evidence="1">
        <text>ATP + H2O + a folded polypeptide = ADP + phosphate + an unfolded polypeptide.</text>
        <dbReference type="EC" id="5.6.1.7"/>
    </reaction>
</comment>
<comment type="subunit">
    <text evidence="1">Forms a cylinder of 14 subunits composed of two heptameric rings stacked back-to-back. Interacts with the co-chaperonin GroES.</text>
</comment>
<comment type="subcellular location">
    <subcellularLocation>
        <location evidence="1">Cytoplasm</location>
    </subcellularLocation>
</comment>
<comment type="similarity">
    <text evidence="1">Belongs to the chaperonin (HSP60) family.</text>
</comment>
<feature type="chain" id="PRO_1000129959" description="Chaperonin GroEL">
    <location>
        <begin position="1"/>
        <end position="541"/>
    </location>
</feature>
<feature type="binding site" evidence="1">
    <location>
        <begin position="30"/>
        <end position="33"/>
    </location>
    <ligand>
        <name>ATP</name>
        <dbReference type="ChEBI" id="CHEBI:30616"/>
    </ligand>
</feature>
<feature type="binding site" evidence="1">
    <location>
        <position position="51"/>
    </location>
    <ligand>
        <name>ATP</name>
        <dbReference type="ChEBI" id="CHEBI:30616"/>
    </ligand>
</feature>
<feature type="binding site" evidence="1">
    <location>
        <begin position="87"/>
        <end position="91"/>
    </location>
    <ligand>
        <name>ATP</name>
        <dbReference type="ChEBI" id="CHEBI:30616"/>
    </ligand>
</feature>
<feature type="binding site" evidence="1">
    <location>
        <position position="415"/>
    </location>
    <ligand>
        <name>ATP</name>
        <dbReference type="ChEBI" id="CHEBI:30616"/>
    </ligand>
</feature>
<feature type="binding site" evidence="1">
    <location>
        <begin position="479"/>
        <end position="481"/>
    </location>
    <ligand>
        <name>ATP</name>
        <dbReference type="ChEBI" id="CHEBI:30616"/>
    </ligand>
</feature>
<feature type="binding site" evidence="1">
    <location>
        <position position="495"/>
    </location>
    <ligand>
        <name>ATP</name>
        <dbReference type="ChEBI" id="CHEBI:30616"/>
    </ligand>
</feature>
<keyword id="KW-0067">ATP-binding</keyword>
<keyword id="KW-0143">Chaperone</keyword>
<keyword id="KW-0963">Cytoplasm</keyword>
<keyword id="KW-0413">Isomerase</keyword>
<keyword id="KW-0547">Nucleotide-binding</keyword>
<keyword id="KW-0346">Stress response</keyword>
<organism>
    <name type="scientific">Acinetobacter baumannii (strain SDF)</name>
    <dbReference type="NCBI Taxonomy" id="509170"/>
    <lineage>
        <taxon>Bacteria</taxon>
        <taxon>Pseudomonadati</taxon>
        <taxon>Pseudomonadota</taxon>
        <taxon>Gammaproteobacteria</taxon>
        <taxon>Moraxellales</taxon>
        <taxon>Moraxellaceae</taxon>
        <taxon>Acinetobacter</taxon>
        <taxon>Acinetobacter calcoaceticus/baumannii complex</taxon>
    </lineage>
</organism>